<feature type="chain" id="PRO_0000100520" description="Phosphoribosylformylglycinamidine synthase subunit PurL">
    <location>
        <begin position="1"/>
        <end position="697"/>
    </location>
</feature>
<feature type="active site" evidence="1">
    <location>
        <position position="34"/>
    </location>
</feature>
<feature type="active site" description="Proton acceptor" evidence="1">
    <location>
        <position position="80"/>
    </location>
</feature>
<feature type="binding site" evidence="1">
    <location>
        <position position="37"/>
    </location>
    <ligand>
        <name>ATP</name>
        <dbReference type="ChEBI" id="CHEBI:30616"/>
    </ligand>
</feature>
<feature type="binding site" evidence="1">
    <location>
        <position position="76"/>
    </location>
    <ligand>
        <name>ATP</name>
        <dbReference type="ChEBI" id="CHEBI:30616"/>
    </ligand>
</feature>
<feature type="binding site" evidence="1">
    <location>
        <position position="78"/>
    </location>
    <ligand>
        <name>Mg(2+)</name>
        <dbReference type="ChEBI" id="CHEBI:18420"/>
        <label>1</label>
    </ligand>
</feature>
<feature type="binding site" evidence="1">
    <location>
        <begin position="79"/>
        <end position="82"/>
    </location>
    <ligand>
        <name>substrate</name>
    </ligand>
</feature>
<feature type="binding site" evidence="1">
    <location>
        <position position="101"/>
    </location>
    <ligand>
        <name>substrate</name>
    </ligand>
</feature>
<feature type="binding site" evidence="1">
    <location>
        <position position="102"/>
    </location>
    <ligand>
        <name>Mg(2+)</name>
        <dbReference type="ChEBI" id="CHEBI:18420"/>
        <label>2</label>
    </ligand>
</feature>
<feature type="binding site" evidence="1">
    <location>
        <position position="224"/>
    </location>
    <ligand>
        <name>substrate</name>
    </ligand>
</feature>
<feature type="binding site" evidence="1">
    <location>
        <position position="250"/>
    </location>
    <ligand>
        <name>Mg(2+)</name>
        <dbReference type="ChEBI" id="CHEBI:18420"/>
        <label>2</label>
    </ligand>
</feature>
<feature type="binding site" evidence="1">
    <location>
        <begin position="294"/>
        <end position="296"/>
    </location>
    <ligand>
        <name>substrate</name>
    </ligand>
</feature>
<feature type="binding site" evidence="1">
    <location>
        <position position="472"/>
    </location>
    <ligand>
        <name>ATP</name>
        <dbReference type="ChEBI" id="CHEBI:30616"/>
    </ligand>
</feature>
<feature type="binding site" evidence="1">
    <location>
        <position position="509"/>
    </location>
    <ligand>
        <name>ATP</name>
        <dbReference type="ChEBI" id="CHEBI:30616"/>
    </ligand>
</feature>
<feature type="binding site" evidence="1">
    <location>
        <position position="512"/>
    </location>
    <ligand>
        <name>substrate</name>
    </ligand>
</feature>
<accession>Q8ZZJ7</accession>
<sequence>MALSPGELELIRSALGREPTEVEYALFRSHWSEHCSYKSTRMWLRRLPSKAPWVVRGPGTDAPLVEIAEGLYATFKIESHNHPSAVDPYNGAATGVGGIIRDILTVGARPIALLVNLHFGPPSHPHARWIAVNVIRGISDYGNRVGVPVVGGETWFHEDFTYTPIVLATCVGIVEKDGVPPGGAEPGDLIIVAGLGADKSGLGGSAFASKTLSEEAEEDLGAVQVADPLMGKKLIDLVREARSCVKFIKDLGGGGLATALAELAEWFQLGVVAELDKIHMADREMGPAEVLTSETQERMVFVTSPSKLECLERLLEKFEVPYSIVGRFTAEGRVVLKWRGEVVGDLPLSLVAKAPETPWPQEPYAPPPLPHVPEPPIEKAIDAVLSSPNVAFKQAIYERFDFDVGVRTVLKPGEGDAAVLKIYERGNLGLAVKGDANPRFTYLNPRLGAANAFIKAYRNVAVVGGRPLAAVDSINVGSPSRPSAYWQFVEAVEGLREAAEALGVPIVGGKVSLYNEYKGKPVAPTVAVVVLGVVEDVSKVNKAVWKEGDGVYVWGVTKDEVGGSEYLHRVHGLVAGQPPSIDYSVEKELAAVVRKWAGRLTGAKDVGLGGLAAALAKMAAASGIGADIDICKAPSTTARLDYLLFSESNGRFIAAGEEGPGTRVGAAGGDYFTLRCGSTIVYKRKVEELAELMSLKI</sequence>
<organism>
    <name type="scientific">Pyrobaculum aerophilum (strain ATCC 51768 / DSM 7523 / JCM 9630 / CIP 104966 / NBRC 100827 / IM2)</name>
    <dbReference type="NCBI Taxonomy" id="178306"/>
    <lineage>
        <taxon>Archaea</taxon>
        <taxon>Thermoproteota</taxon>
        <taxon>Thermoprotei</taxon>
        <taxon>Thermoproteales</taxon>
        <taxon>Thermoproteaceae</taxon>
        <taxon>Pyrobaculum</taxon>
    </lineage>
</organism>
<keyword id="KW-0067">ATP-binding</keyword>
<keyword id="KW-0963">Cytoplasm</keyword>
<keyword id="KW-0436">Ligase</keyword>
<keyword id="KW-0460">Magnesium</keyword>
<keyword id="KW-0479">Metal-binding</keyword>
<keyword id="KW-0547">Nucleotide-binding</keyword>
<keyword id="KW-0658">Purine biosynthesis</keyword>
<keyword id="KW-1185">Reference proteome</keyword>
<gene>
    <name evidence="1" type="primary">purL</name>
    <name type="ordered locus">PAE0225</name>
</gene>
<name>PURL_PYRAE</name>
<comment type="function">
    <text evidence="1">Part of the phosphoribosylformylglycinamidine synthase complex involved in the purines biosynthetic pathway. Catalyzes the ATP-dependent conversion of formylglycinamide ribonucleotide (FGAR) and glutamine to yield formylglycinamidine ribonucleotide (FGAM) and glutamate. The FGAM synthase complex is composed of three subunits. PurQ produces an ammonia molecule by converting glutamine to glutamate. PurL transfers the ammonia molecule to FGAR to form FGAM in an ATP-dependent manner. PurS interacts with PurQ and PurL and is thought to assist in the transfer of the ammonia molecule from PurQ to PurL.</text>
</comment>
<comment type="catalytic activity">
    <reaction evidence="1">
        <text>N(2)-formyl-N(1)-(5-phospho-beta-D-ribosyl)glycinamide + L-glutamine + ATP + H2O = 2-formamido-N(1)-(5-O-phospho-beta-D-ribosyl)acetamidine + L-glutamate + ADP + phosphate + H(+)</text>
        <dbReference type="Rhea" id="RHEA:17129"/>
        <dbReference type="ChEBI" id="CHEBI:15377"/>
        <dbReference type="ChEBI" id="CHEBI:15378"/>
        <dbReference type="ChEBI" id="CHEBI:29985"/>
        <dbReference type="ChEBI" id="CHEBI:30616"/>
        <dbReference type="ChEBI" id="CHEBI:43474"/>
        <dbReference type="ChEBI" id="CHEBI:58359"/>
        <dbReference type="ChEBI" id="CHEBI:147286"/>
        <dbReference type="ChEBI" id="CHEBI:147287"/>
        <dbReference type="ChEBI" id="CHEBI:456216"/>
        <dbReference type="EC" id="6.3.5.3"/>
    </reaction>
</comment>
<comment type="pathway">
    <text evidence="1">Purine metabolism; IMP biosynthesis via de novo pathway; 5-amino-1-(5-phospho-D-ribosyl)imidazole from N(2)-formyl-N(1)-(5-phospho-D-ribosyl)glycinamide: step 1/2.</text>
</comment>
<comment type="subunit">
    <text evidence="1">Monomer. Part of the FGAM synthase complex composed of 1 PurL, 1 PurQ and 2 PurS subunits.</text>
</comment>
<comment type="subcellular location">
    <subcellularLocation>
        <location evidence="1">Cytoplasm</location>
    </subcellularLocation>
</comment>
<comment type="similarity">
    <text evidence="1">Belongs to the FGAMS family.</text>
</comment>
<proteinExistence type="inferred from homology"/>
<protein>
    <recommendedName>
        <fullName evidence="1">Phosphoribosylformylglycinamidine synthase subunit PurL</fullName>
        <shortName evidence="1">FGAM synthase</shortName>
        <ecNumber evidence="1">6.3.5.3</ecNumber>
    </recommendedName>
    <alternativeName>
        <fullName evidence="1">Formylglycinamide ribonucleotide amidotransferase subunit II</fullName>
        <shortName evidence="1">FGAR amidotransferase II</shortName>
        <shortName evidence="1">FGAR-AT II</shortName>
    </alternativeName>
    <alternativeName>
        <fullName evidence="1">Glutamine amidotransferase PurL</fullName>
    </alternativeName>
    <alternativeName>
        <fullName evidence="1">Phosphoribosylformylglycinamidine synthase subunit II</fullName>
    </alternativeName>
</protein>
<reference key="1">
    <citation type="journal article" date="2002" name="Proc. Natl. Acad. Sci. U.S.A.">
        <title>Genome sequence of the hyperthermophilic crenarchaeon Pyrobaculum aerophilum.</title>
        <authorList>
            <person name="Fitz-Gibbon S.T."/>
            <person name="Ladner H."/>
            <person name="Kim U.-J."/>
            <person name="Stetter K.O."/>
            <person name="Simon M.I."/>
            <person name="Miller J.H."/>
        </authorList>
    </citation>
    <scope>NUCLEOTIDE SEQUENCE [LARGE SCALE GENOMIC DNA]</scope>
    <source>
        <strain>ATCC 51768 / DSM 7523 / JCM 9630 / CIP 104966 / NBRC 100827 / IM2</strain>
    </source>
</reference>
<dbReference type="EC" id="6.3.5.3" evidence="1"/>
<dbReference type="EMBL" id="AE009441">
    <property type="protein sequence ID" value="AAL62642.1"/>
    <property type="molecule type" value="Genomic_DNA"/>
</dbReference>
<dbReference type="RefSeq" id="WP_011007114.1">
    <property type="nucleotide sequence ID" value="NC_003364.1"/>
</dbReference>
<dbReference type="SMR" id="Q8ZZJ7"/>
<dbReference type="FunCoup" id="Q8ZZJ7">
    <property type="interactions" value="146"/>
</dbReference>
<dbReference type="STRING" id="178306.PAE0225"/>
<dbReference type="EnsemblBacteria" id="AAL62642">
    <property type="protein sequence ID" value="AAL62642"/>
    <property type="gene ID" value="PAE0225"/>
</dbReference>
<dbReference type="GeneID" id="1464860"/>
<dbReference type="KEGG" id="pai:PAE0225"/>
<dbReference type="PATRIC" id="fig|178306.9.peg.164"/>
<dbReference type="eggNOG" id="arCOG00641">
    <property type="taxonomic scope" value="Archaea"/>
</dbReference>
<dbReference type="HOGENOM" id="CLU_003100_0_1_2"/>
<dbReference type="InParanoid" id="Q8ZZJ7"/>
<dbReference type="UniPathway" id="UPA00074">
    <property type="reaction ID" value="UER00128"/>
</dbReference>
<dbReference type="Proteomes" id="UP000002439">
    <property type="component" value="Chromosome"/>
</dbReference>
<dbReference type="GO" id="GO:0005737">
    <property type="term" value="C:cytoplasm"/>
    <property type="evidence" value="ECO:0007669"/>
    <property type="project" value="UniProtKB-SubCell"/>
</dbReference>
<dbReference type="GO" id="GO:0005524">
    <property type="term" value="F:ATP binding"/>
    <property type="evidence" value="ECO:0007669"/>
    <property type="project" value="UniProtKB-UniRule"/>
</dbReference>
<dbReference type="GO" id="GO:0000287">
    <property type="term" value="F:magnesium ion binding"/>
    <property type="evidence" value="ECO:0007669"/>
    <property type="project" value="UniProtKB-UniRule"/>
</dbReference>
<dbReference type="GO" id="GO:0004642">
    <property type="term" value="F:phosphoribosylformylglycinamidine synthase activity"/>
    <property type="evidence" value="ECO:0000318"/>
    <property type="project" value="GO_Central"/>
</dbReference>
<dbReference type="GO" id="GO:0006189">
    <property type="term" value="P:'de novo' IMP biosynthetic process"/>
    <property type="evidence" value="ECO:0007669"/>
    <property type="project" value="UniProtKB-UniRule"/>
</dbReference>
<dbReference type="GO" id="GO:0006164">
    <property type="term" value="P:purine nucleotide biosynthetic process"/>
    <property type="evidence" value="ECO:0000318"/>
    <property type="project" value="GO_Central"/>
</dbReference>
<dbReference type="CDD" id="cd02203">
    <property type="entry name" value="PurL_repeat1"/>
    <property type="match status" value="1"/>
</dbReference>
<dbReference type="CDD" id="cd02204">
    <property type="entry name" value="PurL_repeat2"/>
    <property type="match status" value="1"/>
</dbReference>
<dbReference type="Gene3D" id="3.90.650.10">
    <property type="entry name" value="PurM-like C-terminal domain"/>
    <property type="match status" value="2"/>
</dbReference>
<dbReference type="Gene3D" id="3.30.1330.10">
    <property type="entry name" value="PurM-like, N-terminal domain"/>
    <property type="match status" value="2"/>
</dbReference>
<dbReference type="HAMAP" id="MF_00420">
    <property type="entry name" value="PurL_2"/>
    <property type="match status" value="1"/>
</dbReference>
<dbReference type="InterPro" id="IPR010074">
    <property type="entry name" value="PRibForGlyAmidine_synth_PurL"/>
</dbReference>
<dbReference type="InterPro" id="IPR041609">
    <property type="entry name" value="PurL_linker"/>
</dbReference>
<dbReference type="InterPro" id="IPR010918">
    <property type="entry name" value="PurM-like_C_dom"/>
</dbReference>
<dbReference type="InterPro" id="IPR036676">
    <property type="entry name" value="PurM-like_C_sf"/>
</dbReference>
<dbReference type="InterPro" id="IPR016188">
    <property type="entry name" value="PurM-like_N"/>
</dbReference>
<dbReference type="InterPro" id="IPR036921">
    <property type="entry name" value="PurM-like_N_sf"/>
</dbReference>
<dbReference type="NCBIfam" id="TIGR01736">
    <property type="entry name" value="FGAM_synth_II"/>
    <property type="match status" value="1"/>
</dbReference>
<dbReference type="NCBIfam" id="NF002290">
    <property type="entry name" value="PRK01213.1"/>
    <property type="match status" value="1"/>
</dbReference>
<dbReference type="PANTHER" id="PTHR43555">
    <property type="entry name" value="PHOSPHORIBOSYLFORMYLGLYCINAMIDINE SYNTHASE SUBUNIT PURL"/>
    <property type="match status" value="1"/>
</dbReference>
<dbReference type="PANTHER" id="PTHR43555:SF1">
    <property type="entry name" value="PHOSPHORIBOSYLFORMYLGLYCINAMIDINE SYNTHASE SUBUNIT PURL"/>
    <property type="match status" value="1"/>
</dbReference>
<dbReference type="Pfam" id="PF00586">
    <property type="entry name" value="AIRS"/>
    <property type="match status" value="2"/>
</dbReference>
<dbReference type="Pfam" id="PF02769">
    <property type="entry name" value="AIRS_C"/>
    <property type="match status" value="2"/>
</dbReference>
<dbReference type="Pfam" id="PF18072">
    <property type="entry name" value="FGAR-AT_linker"/>
    <property type="match status" value="1"/>
</dbReference>
<dbReference type="PIRSF" id="PIRSF001587">
    <property type="entry name" value="FGAM_synthase_II"/>
    <property type="match status" value="1"/>
</dbReference>
<dbReference type="SUPFAM" id="SSF56042">
    <property type="entry name" value="PurM C-terminal domain-like"/>
    <property type="match status" value="2"/>
</dbReference>
<dbReference type="SUPFAM" id="SSF55326">
    <property type="entry name" value="PurM N-terminal domain-like"/>
    <property type="match status" value="2"/>
</dbReference>
<evidence type="ECO:0000255" key="1">
    <source>
        <dbReference type="HAMAP-Rule" id="MF_00420"/>
    </source>
</evidence>